<keyword id="KW-0997">Cell inner membrane</keyword>
<keyword id="KW-1003">Cell membrane</keyword>
<keyword id="KW-0472">Membrane</keyword>
<keyword id="KW-0812">Transmembrane</keyword>
<keyword id="KW-1133">Transmembrane helix</keyword>
<sequence length="179" mass="20780">MKQFLDFLPLVVFFAFYKIYDIYAATAALIVATAIVLIYSWVRFRKVEKMALITFVLVVVFGGLTLFFHNDEFIKWKVTVIYALFAGALLVSQWVMKKPLIQRMLGKELTLPQSVWSKLNLAWAVFFILCGLANIYIAFWLPQNIWVNFKVFGLTALTLIFTLLSGIYIYRHMPQEDKS</sequence>
<accession>Q0TIB6</accession>
<evidence type="ECO:0000255" key="1">
    <source>
        <dbReference type="HAMAP-Rule" id="MF_00189"/>
    </source>
</evidence>
<organism>
    <name type="scientific">Escherichia coli O6:K15:H31 (strain 536 / UPEC)</name>
    <dbReference type="NCBI Taxonomy" id="362663"/>
    <lineage>
        <taxon>Bacteria</taxon>
        <taxon>Pseudomonadati</taxon>
        <taxon>Pseudomonadota</taxon>
        <taxon>Gammaproteobacteria</taxon>
        <taxon>Enterobacterales</taxon>
        <taxon>Enterobacteriaceae</taxon>
        <taxon>Escherichia</taxon>
    </lineage>
</organism>
<name>YCIB_ECOL5</name>
<dbReference type="EMBL" id="CP000247">
    <property type="protein sequence ID" value="ABG69313.1"/>
    <property type="molecule type" value="Genomic_DNA"/>
</dbReference>
<dbReference type="RefSeq" id="WP_000808672.1">
    <property type="nucleotide sequence ID" value="NC_008253.1"/>
</dbReference>
<dbReference type="KEGG" id="ecp:ECP_1302"/>
<dbReference type="HOGENOM" id="CLU_089554_2_0_6"/>
<dbReference type="Proteomes" id="UP000009182">
    <property type="component" value="Chromosome"/>
</dbReference>
<dbReference type="GO" id="GO:0005886">
    <property type="term" value="C:plasma membrane"/>
    <property type="evidence" value="ECO:0007669"/>
    <property type="project" value="UniProtKB-SubCell"/>
</dbReference>
<dbReference type="HAMAP" id="MF_00189">
    <property type="entry name" value="YciB"/>
    <property type="match status" value="1"/>
</dbReference>
<dbReference type="InterPro" id="IPR006008">
    <property type="entry name" value="YciB"/>
</dbReference>
<dbReference type="NCBIfam" id="TIGR00997">
    <property type="entry name" value="ispZ"/>
    <property type="match status" value="1"/>
</dbReference>
<dbReference type="NCBIfam" id="NF001324">
    <property type="entry name" value="PRK00259.1-2"/>
    <property type="match status" value="1"/>
</dbReference>
<dbReference type="NCBIfam" id="NF001325">
    <property type="entry name" value="PRK00259.1-3"/>
    <property type="match status" value="1"/>
</dbReference>
<dbReference type="NCBIfam" id="NF001326">
    <property type="entry name" value="PRK00259.1-4"/>
    <property type="match status" value="1"/>
</dbReference>
<dbReference type="PANTHER" id="PTHR36917:SF1">
    <property type="entry name" value="INNER MEMBRANE-SPANNING PROTEIN YCIB"/>
    <property type="match status" value="1"/>
</dbReference>
<dbReference type="PANTHER" id="PTHR36917">
    <property type="entry name" value="INTRACELLULAR SEPTATION PROTEIN A-RELATED"/>
    <property type="match status" value="1"/>
</dbReference>
<dbReference type="Pfam" id="PF04279">
    <property type="entry name" value="IspA"/>
    <property type="match status" value="1"/>
</dbReference>
<comment type="function">
    <text evidence="1">Plays a role in cell envelope biogenesis, maintenance of cell envelope integrity and membrane homeostasis.</text>
</comment>
<comment type="subcellular location">
    <subcellularLocation>
        <location evidence="1">Cell inner membrane</location>
        <topology evidence="1">Multi-pass membrane protein</topology>
    </subcellularLocation>
</comment>
<comment type="similarity">
    <text evidence="1">Belongs to the YciB family.</text>
</comment>
<protein>
    <recommendedName>
        <fullName evidence="1">Inner membrane-spanning protein YciB</fullName>
    </recommendedName>
</protein>
<proteinExistence type="inferred from homology"/>
<reference key="1">
    <citation type="journal article" date="2006" name="Mol. Microbiol.">
        <title>Role of pathogenicity island-associated integrases in the genome plasticity of uropathogenic Escherichia coli strain 536.</title>
        <authorList>
            <person name="Hochhut B."/>
            <person name="Wilde C."/>
            <person name="Balling G."/>
            <person name="Middendorf B."/>
            <person name="Dobrindt U."/>
            <person name="Brzuszkiewicz E."/>
            <person name="Gottschalk G."/>
            <person name="Carniel E."/>
            <person name="Hacker J."/>
        </authorList>
    </citation>
    <scope>NUCLEOTIDE SEQUENCE [LARGE SCALE GENOMIC DNA]</scope>
    <source>
        <strain>536 / UPEC</strain>
    </source>
</reference>
<gene>
    <name evidence="1" type="primary">yciB</name>
    <name type="ordered locus">ECP_1302</name>
</gene>
<feature type="chain" id="PRO_1000021010" description="Inner membrane-spanning protein YciB">
    <location>
        <begin position="1"/>
        <end position="179"/>
    </location>
</feature>
<feature type="transmembrane region" description="Helical" evidence="1">
    <location>
        <begin position="22"/>
        <end position="42"/>
    </location>
</feature>
<feature type="transmembrane region" description="Helical" evidence="1">
    <location>
        <begin position="50"/>
        <end position="70"/>
    </location>
</feature>
<feature type="transmembrane region" description="Helical" evidence="1">
    <location>
        <begin position="76"/>
        <end position="96"/>
    </location>
</feature>
<feature type="transmembrane region" description="Helical" evidence="1">
    <location>
        <begin position="121"/>
        <end position="141"/>
    </location>
</feature>
<feature type="transmembrane region" description="Helical" evidence="1">
    <location>
        <begin position="149"/>
        <end position="169"/>
    </location>
</feature>